<accession>A0QKC8</accession>
<proteinExistence type="inferred from homology"/>
<organism>
    <name type="scientific">Mycobacterium avium (strain 104)</name>
    <dbReference type="NCBI Taxonomy" id="243243"/>
    <lineage>
        <taxon>Bacteria</taxon>
        <taxon>Bacillati</taxon>
        <taxon>Actinomycetota</taxon>
        <taxon>Actinomycetes</taxon>
        <taxon>Mycobacteriales</taxon>
        <taxon>Mycobacteriaceae</taxon>
        <taxon>Mycobacterium</taxon>
        <taxon>Mycobacterium avium complex (MAC)</taxon>
    </lineage>
</organism>
<reference key="1">
    <citation type="submission" date="2006-10" db="EMBL/GenBank/DDBJ databases">
        <authorList>
            <person name="Fleischmann R.D."/>
            <person name="Dodson R.J."/>
            <person name="Haft D.H."/>
            <person name="Merkel J.S."/>
            <person name="Nelson W.C."/>
            <person name="Fraser C.M."/>
        </authorList>
    </citation>
    <scope>NUCLEOTIDE SEQUENCE [LARGE SCALE GENOMIC DNA]</scope>
    <source>
        <strain>104</strain>
    </source>
</reference>
<name>FBIB_MYCA1</name>
<dbReference type="EC" id="6.3.2.31" evidence="1"/>
<dbReference type="EC" id="6.3.2.34" evidence="1"/>
<dbReference type="EC" id="1.3.8.17" evidence="1"/>
<dbReference type="EMBL" id="CP000479">
    <property type="protein sequence ID" value="ABK64439.1"/>
    <property type="molecule type" value="Genomic_DNA"/>
</dbReference>
<dbReference type="RefSeq" id="WP_011725953.1">
    <property type="nucleotide sequence ID" value="NC_008595.1"/>
</dbReference>
<dbReference type="SMR" id="A0QKC8"/>
<dbReference type="KEGG" id="mav:MAV_4225"/>
<dbReference type="HOGENOM" id="CLU_051152_0_0_11"/>
<dbReference type="UniPathway" id="UPA00071"/>
<dbReference type="Proteomes" id="UP000001574">
    <property type="component" value="Chromosome"/>
</dbReference>
<dbReference type="GO" id="GO:0052618">
    <property type="term" value="F:coenzyme F420-0:L-glutamate ligase activity"/>
    <property type="evidence" value="ECO:0007669"/>
    <property type="project" value="UniProtKB-UniRule"/>
</dbReference>
<dbReference type="GO" id="GO:0052619">
    <property type="term" value="F:coenzyme F420-1:gamma-L-glutamate ligase activity"/>
    <property type="evidence" value="ECO:0007669"/>
    <property type="project" value="UniProtKB-UniRule"/>
</dbReference>
<dbReference type="GO" id="GO:0005525">
    <property type="term" value="F:GTP binding"/>
    <property type="evidence" value="ECO:0007669"/>
    <property type="project" value="UniProtKB-KW"/>
</dbReference>
<dbReference type="GO" id="GO:0046872">
    <property type="term" value="F:metal ion binding"/>
    <property type="evidence" value="ECO:0007669"/>
    <property type="project" value="UniProtKB-KW"/>
</dbReference>
<dbReference type="GO" id="GO:0052890">
    <property type="term" value="F:oxidoreductase activity, acting on the CH-CH group of donors, with a flavin as acceptor"/>
    <property type="evidence" value="ECO:0007669"/>
    <property type="project" value="UniProtKB-UniRule"/>
</dbReference>
<dbReference type="GO" id="GO:0052645">
    <property type="term" value="P:F420-0 metabolic process"/>
    <property type="evidence" value="ECO:0007669"/>
    <property type="project" value="UniProtKB-UniRule"/>
</dbReference>
<dbReference type="CDD" id="cd20607">
    <property type="entry name" value="FbiB_C-like"/>
    <property type="match status" value="1"/>
</dbReference>
<dbReference type="FunFam" id="3.40.109.10:FF:000009">
    <property type="entry name" value="Coenzyme F420:L-glutamate ligase"/>
    <property type="match status" value="1"/>
</dbReference>
<dbReference type="Gene3D" id="3.30.1330.100">
    <property type="entry name" value="CofE-like"/>
    <property type="match status" value="1"/>
</dbReference>
<dbReference type="Gene3D" id="3.90.1660.10">
    <property type="entry name" value="CofE-like domain"/>
    <property type="match status" value="1"/>
</dbReference>
<dbReference type="Gene3D" id="3.40.109.10">
    <property type="entry name" value="NADH Oxidase"/>
    <property type="match status" value="1"/>
</dbReference>
<dbReference type="HAMAP" id="MF_01259">
    <property type="entry name" value="F420_ligase_FbiB"/>
    <property type="match status" value="1"/>
</dbReference>
<dbReference type="InterPro" id="IPR008225">
    <property type="entry name" value="F420-0_g-glutamyl_ligase"/>
</dbReference>
<dbReference type="InterPro" id="IPR002847">
    <property type="entry name" value="F420-0_gamma-glut_ligase-dom"/>
</dbReference>
<dbReference type="InterPro" id="IPR019943">
    <property type="entry name" value="F420_FbiB_C"/>
</dbReference>
<dbReference type="InterPro" id="IPR023661">
    <property type="entry name" value="FbiB"/>
</dbReference>
<dbReference type="InterPro" id="IPR029479">
    <property type="entry name" value="Nitroreductase"/>
</dbReference>
<dbReference type="InterPro" id="IPR000415">
    <property type="entry name" value="Nitroreductase-like"/>
</dbReference>
<dbReference type="NCBIfam" id="TIGR01916">
    <property type="entry name" value="F420_cofE"/>
    <property type="match status" value="1"/>
</dbReference>
<dbReference type="NCBIfam" id="TIGR03553">
    <property type="entry name" value="F420_FbiB_CTERM"/>
    <property type="match status" value="1"/>
</dbReference>
<dbReference type="NCBIfam" id="NF009810">
    <property type="entry name" value="PRK13294.1"/>
    <property type="match status" value="1"/>
</dbReference>
<dbReference type="PANTHER" id="PTHR47917">
    <property type="match status" value="1"/>
</dbReference>
<dbReference type="PANTHER" id="PTHR47917:SF1">
    <property type="entry name" value="COENZYME F420:L-GLUTAMATE LIGASE"/>
    <property type="match status" value="1"/>
</dbReference>
<dbReference type="Pfam" id="PF01996">
    <property type="entry name" value="F420_ligase"/>
    <property type="match status" value="1"/>
</dbReference>
<dbReference type="Pfam" id="PF00881">
    <property type="entry name" value="Nitroreductase"/>
    <property type="match status" value="1"/>
</dbReference>
<dbReference type="SUPFAM" id="SSF144010">
    <property type="entry name" value="CofE-like"/>
    <property type="match status" value="1"/>
</dbReference>
<dbReference type="SUPFAM" id="SSF55469">
    <property type="entry name" value="FMN-dependent nitroreductase-like"/>
    <property type="match status" value="1"/>
</dbReference>
<evidence type="ECO:0000255" key="1">
    <source>
        <dbReference type="HAMAP-Rule" id="MF_01259"/>
    </source>
</evidence>
<comment type="function">
    <text evidence="1">Bifunctional enzyme that catalyzes the GTP-dependent successive addition of multiple gamma-linked L-glutamates to the L-lactyl phosphodiester of 7,8-didemethyl-8-hydroxy-5-deazariboflavin (F420-0) to form polyglutamated F420 derivatives, and the FMNH2-dependent reduction of dehydro-F420-0 to form F420-0.</text>
</comment>
<comment type="catalytic activity">
    <reaction evidence="1">
        <text>oxidized coenzyme F420-0 + GTP + L-glutamate = oxidized coenzyme F420-1 + GDP + phosphate + H(+)</text>
        <dbReference type="Rhea" id="RHEA:30555"/>
        <dbReference type="ChEBI" id="CHEBI:15378"/>
        <dbReference type="ChEBI" id="CHEBI:29985"/>
        <dbReference type="ChEBI" id="CHEBI:37565"/>
        <dbReference type="ChEBI" id="CHEBI:43474"/>
        <dbReference type="ChEBI" id="CHEBI:58189"/>
        <dbReference type="ChEBI" id="CHEBI:59907"/>
        <dbReference type="ChEBI" id="CHEBI:59920"/>
        <dbReference type="EC" id="6.3.2.31"/>
    </reaction>
</comment>
<comment type="catalytic activity">
    <reaction evidence="1">
        <text>oxidized coenzyme F420-1 + GTP + L-glutamate = oxidized coenzyme F420-2 + GDP + phosphate + H(+)</text>
        <dbReference type="Rhea" id="RHEA:30523"/>
        <dbReference type="ChEBI" id="CHEBI:15378"/>
        <dbReference type="ChEBI" id="CHEBI:29985"/>
        <dbReference type="ChEBI" id="CHEBI:37565"/>
        <dbReference type="ChEBI" id="CHEBI:43474"/>
        <dbReference type="ChEBI" id="CHEBI:57922"/>
        <dbReference type="ChEBI" id="CHEBI:58189"/>
        <dbReference type="ChEBI" id="CHEBI:59920"/>
        <dbReference type="EC" id="6.3.2.34"/>
    </reaction>
</comment>
<comment type="catalytic activity">
    <reaction evidence="1">
        <text>oxidized coenzyme F420-(gamma-L-Glu)(n) + GTP + L-glutamate = oxidized coenzyme F420-(gamma-L-Glu)(n+1) + GDP + phosphate + H(+)</text>
        <dbReference type="Rhea" id="RHEA:51236"/>
        <dbReference type="Rhea" id="RHEA-COMP:12939"/>
        <dbReference type="Rhea" id="RHEA-COMP:12940"/>
        <dbReference type="ChEBI" id="CHEBI:15378"/>
        <dbReference type="ChEBI" id="CHEBI:29985"/>
        <dbReference type="ChEBI" id="CHEBI:37565"/>
        <dbReference type="ChEBI" id="CHEBI:43474"/>
        <dbReference type="ChEBI" id="CHEBI:58189"/>
        <dbReference type="ChEBI" id="CHEBI:133980"/>
    </reaction>
</comment>
<comment type="catalytic activity">
    <reaction evidence="1">
        <text>oxidized coenzyme F420-0 + FMN + H(+) = dehydro coenzyme F420-0 + FMNH2</text>
        <dbReference type="Rhea" id="RHEA:60360"/>
        <dbReference type="ChEBI" id="CHEBI:15378"/>
        <dbReference type="ChEBI" id="CHEBI:57618"/>
        <dbReference type="ChEBI" id="CHEBI:58210"/>
        <dbReference type="ChEBI" id="CHEBI:59907"/>
        <dbReference type="ChEBI" id="CHEBI:143705"/>
        <dbReference type="EC" id="1.3.8.17"/>
    </reaction>
</comment>
<comment type="cofactor">
    <cofactor evidence="1">
        <name>Mg(2+)</name>
        <dbReference type="ChEBI" id="CHEBI:18420"/>
    </cofactor>
    <cofactor evidence="1">
        <name>Mn(2+)</name>
        <dbReference type="ChEBI" id="CHEBI:29035"/>
    </cofactor>
    <text evidence="1">Binds 2 divalent metal cations per subunit. The ions could be magnesium and/or manganese.</text>
</comment>
<comment type="cofactor">
    <cofactor evidence="1">
        <name>K(+)</name>
        <dbReference type="ChEBI" id="CHEBI:29103"/>
    </cofactor>
    <text evidence="1">Monovalent cation. The ion could be potassium.</text>
</comment>
<comment type="pathway">
    <text evidence="1">Cofactor biosynthesis; coenzyme F420 biosynthesis.</text>
</comment>
<comment type="similarity">
    <text evidence="1">In the N-terminal section; belongs to the CofE family.</text>
</comment>
<feature type="chain" id="PRO_1000067260" description="Bifunctional F420 biosynthesis protein FbiB">
    <location>
        <begin position="1"/>
        <end position="449"/>
    </location>
</feature>
<feature type="region of interest" description="Coenzyme F420:L-glutamate ligase" evidence="1">
    <location>
        <begin position="1"/>
        <end position="245"/>
    </location>
</feature>
<feature type="region of interest" description="Dehydro-coenzyme F420-0 reductase" evidence="1">
    <location>
        <begin position="246"/>
        <end position="449"/>
    </location>
</feature>
<feature type="binding site" evidence="1">
    <location>
        <begin position="21"/>
        <end position="24"/>
    </location>
    <ligand>
        <name>GTP</name>
        <dbReference type="ChEBI" id="CHEBI:37565"/>
    </ligand>
</feature>
<feature type="binding site" evidence="1">
    <location>
        <position position="51"/>
    </location>
    <ligand>
        <name>GTP</name>
        <dbReference type="ChEBI" id="CHEBI:37565"/>
    </ligand>
</feature>
<feature type="binding site" evidence="1">
    <location>
        <position position="56"/>
    </location>
    <ligand>
        <name>GTP</name>
        <dbReference type="ChEBI" id="CHEBI:37565"/>
    </ligand>
</feature>
<feature type="binding site" evidence="1">
    <location>
        <position position="110"/>
    </location>
    <ligand>
        <name>a divalent metal cation</name>
        <dbReference type="ChEBI" id="CHEBI:60240"/>
        <label>1</label>
    </ligand>
</feature>
<feature type="binding site" evidence="1">
    <location>
        <position position="113"/>
    </location>
    <ligand>
        <name>GTP</name>
        <dbReference type="ChEBI" id="CHEBI:37565"/>
    </ligand>
</feature>
<feature type="binding site" evidence="1">
    <location>
        <position position="151"/>
    </location>
    <ligand>
        <name>a divalent metal cation</name>
        <dbReference type="ChEBI" id="CHEBI:60240"/>
        <label>1</label>
    </ligand>
</feature>
<feature type="binding site" evidence="1">
    <location>
        <position position="152"/>
    </location>
    <ligand>
        <name>a divalent metal cation</name>
        <dbReference type="ChEBI" id="CHEBI:60240"/>
        <label>2</label>
    </ligand>
</feature>
<feature type="binding site" evidence="1">
    <location>
        <begin position="261"/>
        <end position="265"/>
    </location>
    <ligand>
        <name>FMN</name>
        <dbReference type="ChEBI" id="CHEBI:58210"/>
    </ligand>
</feature>
<feature type="binding site" evidence="1">
    <location>
        <position position="289"/>
    </location>
    <ligand>
        <name>FMN</name>
        <dbReference type="ChEBI" id="CHEBI:58210"/>
    </ligand>
</feature>
<feature type="binding site" evidence="1">
    <location>
        <position position="321"/>
    </location>
    <ligand>
        <name>coenzyme F420-(gamma-Glu)n</name>
        <dbReference type="ChEBI" id="CHEBI:133980"/>
    </ligand>
</feature>
<feature type="binding site" evidence="1">
    <location>
        <position position="400"/>
    </location>
    <ligand>
        <name>FMN</name>
        <dbReference type="ChEBI" id="CHEBI:58210"/>
    </ligand>
</feature>
<feature type="binding site" evidence="1">
    <location>
        <position position="437"/>
    </location>
    <ligand>
        <name>FMN</name>
        <dbReference type="ChEBI" id="CHEBI:58210"/>
    </ligand>
</feature>
<sequence>MSPAGEHGTAAPIEILPVAGLPEFRPGDDLGAAVAKAAPWLRDGDVVVVTSKAVSKCEGRLVPAPADPEERDRLRRKLVDEEAVRVLARKGRTLITENRHGLVQAAAGVDGSNVGRDELALLPLDPDASAAALRARLRELLGVEVAVLVTDTMGRAWRNGQTDAAVGAAGLAVLHGYSGAVDQHGNELLVTEVAIADEIAAAADLVKGKLTAMPVAVVRGLSVTDDGSTARQLLRPGTEDLFWLGTAEAIELGRRQAQLLRRSVRRFSAEPVPAELVREAVAEALTAPAPHHTRPVRFVWLQTPAVRTRLLDAMKDKWRADLAGDGRPAESIERRVARGQILYDAPEVVIPMLVPDGAHSYPDAARTDAEHTMFTVAVGAAVQALLVGLAVRGLGSCWIGSTIFAADLVRAVLGLPADWEPLGAIAIGYAAEPAGPRDPADPGDLLIRK</sequence>
<keyword id="KW-0342">GTP-binding</keyword>
<keyword id="KW-0436">Ligase</keyword>
<keyword id="KW-0460">Magnesium</keyword>
<keyword id="KW-0464">Manganese</keyword>
<keyword id="KW-0479">Metal-binding</keyword>
<keyword id="KW-0511">Multifunctional enzyme</keyword>
<keyword id="KW-0547">Nucleotide-binding</keyword>
<keyword id="KW-0560">Oxidoreductase</keyword>
<keyword id="KW-0630">Potassium</keyword>
<gene>
    <name evidence="1" type="primary">fbiB</name>
    <name type="ordered locus">MAV_4225</name>
</gene>
<protein>
    <recommendedName>
        <fullName evidence="1">Bifunctional F420 biosynthesis protein FbiB</fullName>
    </recommendedName>
    <domain>
        <recommendedName>
            <fullName evidence="1">Coenzyme F420:L-glutamate ligase</fullName>
            <ecNumber evidence="1">6.3.2.31</ecNumber>
            <ecNumber evidence="1">6.3.2.34</ecNumber>
        </recommendedName>
        <alternativeName>
            <fullName evidence="1">Coenzyme F420-0:L-glutamate ligase</fullName>
        </alternativeName>
        <alternativeName>
            <fullName evidence="1">Coenzyme F420-1:gamma-L-glutamate ligase</fullName>
        </alternativeName>
    </domain>
    <domain>
        <recommendedName>
            <fullName evidence="1">Dehydro-coenzyme F420-0 reductase</fullName>
            <ecNumber evidence="1">1.3.8.17</ecNumber>
        </recommendedName>
    </domain>
</protein>